<dbReference type="EC" id="1.1.1.18" evidence="1"/>
<dbReference type="EMBL" id="BA000030">
    <property type="protein sequence ID" value="BAC68944.1"/>
    <property type="molecule type" value="Genomic_DNA"/>
</dbReference>
<dbReference type="RefSeq" id="WP_010982672.1">
    <property type="nucleotide sequence ID" value="NZ_JZJK01000078.1"/>
</dbReference>
<dbReference type="SMR" id="Q82NQ8"/>
<dbReference type="GeneID" id="41538335"/>
<dbReference type="KEGG" id="sma:SAVERM_1234"/>
<dbReference type="eggNOG" id="COG0673">
    <property type="taxonomic scope" value="Bacteria"/>
</dbReference>
<dbReference type="HOGENOM" id="CLU_023194_0_1_11"/>
<dbReference type="OrthoDB" id="256869at2"/>
<dbReference type="Proteomes" id="UP000000428">
    <property type="component" value="Chromosome"/>
</dbReference>
<dbReference type="GO" id="GO:0050112">
    <property type="term" value="F:inositol 2-dehydrogenase (NAD+) activity"/>
    <property type="evidence" value="ECO:0007669"/>
    <property type="project" value="UniProtKB-UniRule"/>
</dbReference>
<dbReference type="GO" id="GO:0000166">
    <property type="term" value="F:nucleotide binding"/>
    <property type="evidence" value="ECO:0007669"/>
    <property type="project" value="InterPro"/>
</dbReference>
<dbReference type="GO" id="GO:0019310">
    <property type="term" value="P:inositol catabolic process"/>
    <property type="evidence" value="ECO:0007669"/>
    <property type="project" value="UniProtKB-UniRule"/>
</dbReference>
<dbReference type="Gene3D" id="3.30.360.10">
    <property type="entry name" value="Dihydrodipicolinate Reductase, domain 2"/>
    <property type="match status" value="1"/>
</dbReference>
<dbReference type="Gene3D" id="3.40.50.720">
    <property type="entry name" value="NAD(P)-binding Rossmann-like Domain"/>
    <property type="match status" value="1"/>
</dbReference>
<dbReference type="HAMAP" id="MF_01671">
    <property type="entry name" value="IolG"/>
    <property type="match status" value="1"/>
</dbReference>
<dbReference type="InterPro" id="IPR050424">
    <property type="entry name" value="Gfo-Idh-MocA_inositol_DH"/>
</dbReference>
<dbReference type="InterPro" id="IPR004104">
    <property type="entry name" value="Gfo/Idh/MocA-like_OxRdtase_C"/>
</dbReference>
<dbReference type="InterPro" id="IPR000683">
    <property type="entry name" value="Gfo/Idh/MocA-like_OxRdtase_N"/>
</dbReference>
<dbReference type="InterPro" id="IPR023794">
    <property type="entry name" value="MI/DCI_dehydrogenase"/>
</dbReference>
<dbReference type="InterPro" id="IPR036291">
    <property type="entry name" value="NAD(P)-bd_dom_sf"/>
</dbReference>
<dbReference type="PANTHER" id="PTHR43593">
    <property type="match status" value="1"/>
</dbReference>
<dbReference type="PANTHER" id="PTHR43593:SF1">
    <property type="entry name" value="INOSITOL 2-DEHYDROGENASE"/>
    <property type="match status" value="1"/>
</dbReference>
<dbReference type="Pfam" id="PF01408">
    <property type="entry name" value="GFO_IDH_MocA"/>
    <property type="match status" value="1"/>
</dbReference>
<dbReference type="Pfam" id="PF02894">
    <property type="entry name" value="GFO_IDH_MocA_C"/>
    <property type="match status" value="1"/>
</dbReference>
<dbReference type="SUPFAM" id="SSF55347">
    <property type="entry name" value="Glyceraldehyde-3-phosphate dehydrogenase-like, C-terminal domain"/>
    <property type="match status" value="1"/>
</dbReference>
<dbReference type="SUPFAM" id="SSF51735">
    <property type="entry name" value="NAD(P)-binding Rossmann-fold domains"/>
    <property type="match status" value="1"/>
</dbReference>
<comment type="function">
    <text evidence="1">Involved in the oxidation of myo-inositol (MI) to 2-keto-myo-inositol (2KMI or 2-inosose).</text>
</comment>
<comment type="catalytic activity">
    <reaction evidence="1">
        <text>myo-inositol + NAD(+) = scyllo-inosose + NADH + H(+)</text>
        <dbReference type="Rhea" id="RHEA:16949"/>
        <dbReference type="ChEBI" id="CHEBI:15378"/>
        <dbReference type="ChEBI" id="CHEBI:17268"/>
        <dbReference type="ChEBI" id="CHEBI:17811"/>
        <dbReference type="ChEBI" id="CHEBI:57540"/>
        <dbReference type="ChEBI" id="CHEBI:57945"/>
        <dbReference type="EC" id="1.1.1.18"/>
    </reaction>
</comment>
<comment type="subunit">
    <text evidence="1">Homotetramer.</text>
</comment>
<comment type="similarity">
    <text evidence="1">Belongs to the Gfo/Idh/MocA family.</text>
</comment>
<evidence type="ECO:0000255" key="1">
    <source>
        <dbReference type="HAMAP-Rule" id="MF_01671"/>
    </source>
</evidence>
<organism>
    <name type="scientific">Streptomyces avermitilis (strain ATCC 31267 / DSM 46492 / JCM 5070 / NBRC 14893 / NCIMB 12804 / NRRL 8165 / MA-4680)</name>
    <dbReference type="NCBI Taxonomy" id="227882"/>
    <lineage>
        <taxon>Bacteria</taxon>
        <taxon>Bacillati</taxon>
        <taxon>Actinomycetota</taxon>
        <taxon>Actinomycetes</taxon>
        <taxon>Kitasatosporales</taxon>
        <taxon>Streptomycetaceae</taxon>
        <taxon>Streptomyces</taxon>
    </lineage>
</organism>
<keyword id="KW-0520">NAD</keyword>
<keyword id="KW-0560">Oxidoreductase</keyword>
<keyword id="KW-1185">Reference proteome</keyword>
<reference key="1">
    <citation type="journal article" date="2003" name="Nat. Biotechnol.">
        <title>Complete genome sequence and comparative analysis of the industrial microorganism Streptomyces avermitilis.</title>
        <authorList>
            <person name="Ikeda H."/>
            <person name="Ishikawa J."/>
            <person name="Hanamoto A."/>
            <person name="Shinose M."/>
            <person name="Kikuchi H."/>
            <person name="Shiba T."/>
            <person name="Sakaki Y."/>
            <person name="Hattori M."/>
            <person name="Omura S."/>
        </authorList>
    </citation>
    <scope>NUCLEOTIDE SEQUENCE [LARGE SCALE GENOMIC DNA]</scope>
    <source>
        <strain>ATCC 31267 / DSM 46492 / JCM 5070 / NBRC 14893 / NCIMB 12804 / NRRL 8165 / MA-4680</strain>
    </source>
</reference>
<reference key="2">
    <citation type="journal article" date="2001" name="Proc. Natl. Acad. Sci. U.S.A.">
        <title>Genome sequence of an industrial microorganism Streptomyces avermitilis: deducing the ability of producing secondary metabolites.</title>
        <authorList>
            <person name="Omura S."/>
            <person name="Ikeda H."/>
            <person name="Ishikawa J."/>
            <person name="Hanamoto A."/>
            <person name="Takahashi C."/>
            <person name="Shinose M."/>
            <person name="Takahashi Y."/>
            <person name="Horikawa H."/>
            <person name="Nakazawa H."/>
            <person name="Osonoe T."/>
            <person name="Kikuchi H."/>
            <person name="Shiba T."/>
            <person name="Sakaki Y."/>
            <person name="Hattori M."/>
        </authorList>
    </citation>
    <scope>NUCLEOTIDE SEQUENCE [LARGE SCALE GENOMIC DNA]</scope>
    <source>
        <strain>ATCC 31267 / DSM 46492 / JCM 5070 / NBRC 14893 / NCIMB 12804 / NRRL 8165 / MA-4680</strain>
    </source>
</reference>
<protein>
    <recommendedName>
        <fullName evidence="1">Inositol 2-dehydrogenase</fullName>
        <ecNumber evidence="1">1.1.1.18</ecNumber>
    </recommendedName>
    <alternativeName>
        <fullName evidence="1">Myo-inositol 2-dehydrogenase</fullName>
        <shortName evidence="1">MI 2-dehydrogenase</shortName>
    </alternativeName>
</protein>
<accession>Q82NQ8</accession>
<proteinExistence type="inferred from homology"/>
<sequence length="343" mass="36308">MSQLLGVAVLGAGHMGADHIRRLDSVVSGARVAAVADPAKERAEEAVAGLDGVLVHTEVAAALDAPGVEAVLIASPGPAHEEALLAAFARGLPVLCEKPMVPDSAGALRIVEAEARLGRRLAQVGFMRRYDAEYMGLKSLLDSGRLGRPLMLHCTHRNVSSPPGFTSAMLINSSVSHEIDAARWLLGQELTAVTVLRPRPSAHAPEGLLDPQFVLFETAGGALVDVEILVNSGFGYQVRCEAVCEAGSVRIGDAHTMVVTSAGGAYQEVAQDYLVRFADAYDREVREWVDATRRGQVTGPSAWDGYAASVVAEAGVRAQDTGDRMTVELAPRPDLYGQNPISR</sequence>
<feature type="chain" id="PRO_0000352597" description="Inositol 2-dehydrogenase">
    <location>
        <begin position="1"/>
        <end position="343"/>
    </location>
</feature>
<gene>
    <name evidence="1" type="primary">iolG</name>
    <name type="ordered locus">SAV_1234</name>
</gene>
<name>IOLG_STRAW</name>